<evidence type="ECO:0000255" key="1"/>
<evidence type="ECO:0000269" key="2">
    <source>
    </source>
</evidence>
<evidence type="ECO:0000269" key="3">
    <source>
    </source>
</evidence>
<evidence type="ECO:0000269" key="4">
    <source>
    </source>
</evidence>
<evidence type="ECO:0000269" key="5">
    <source>
    </source>
</evidence>
<evidence type="ECO:0000269" key="6">
    <source>
    </source>
</evidence>
<evidence type="ECO:0000269" key="7">
    <source>
    </source>
</evidence>
<evidence type="ECO:0000269" key="8">
    <source>
    </source>
</evidence>
<evidence type="ECO:0000269" key="9">
    <source>
    </source>
</evidence>
<evidence type="ECO:0000269" key="10">
    <source>
    </source>
</evidence>
<evidence type="ECO:0000269" key="11">
    <source>
    </source>
</evidence>
<evidence type="ECO:0000269" key="12">
    <source>
    </source>
</evidence>
<evidence type="ECO:0000269" key="13">
    <source>
    </source>
</evidence>
<evidence type="ECO:0000269" key="14">
    <source>
    </source>
</evidence>
<evidence type="ECO:0000269" key="15">
    <source>
    </source>
</evidence>
<evidence type="ECO:0000269" key="16">
    <source>
    </source>
</evidence>
<evidence type="ECO:0000269" key="17">
    <source>
    </source>
</evidence>
<evidence type="ECO:0000269" key="18">
    <source>
    </source>
</evidence>
<evidence type="ECO:0000269" key="19">
    <source>
    </source>
</evidence>
<evidence type="ECO:0000305" key="20"/>
<evidence type="ECO:0007829" key="21">
    <source>
        <dbReference type="PDB" id="4OH3"/>
    </source>
</evidence>
<name>PTR7_ARATH</name>
<proteinExistence type="evidence at protein level"/>
<feature type="chain" id="PRO_0000064316" description="Protein NRT1/ PTR FAMILY 6.3">
    <location>
        <begin position="1"/>
        <end position="590"/>
    </location>
</feature>
<feature type="transmembrane region" description="Helical" evidence="1">
    <location>
        <begin position="46"/>
        <end position="66"/>
    </location>
</feature>
<feature type="transmembrane region" description="Helical" evidence="1">
    <location>
        <begin position="77"/>
        <end position="97"/>
    </location>
</feature>
<feature type="transmembrane region" description="Helical" evidence="1">
    <location>
        <begin position="102"/>
        <end position="122"/>
    </location>
</feature>
<feature type="transmembrane region" description="Helical" evidence="1">
    <location>
        <begin position="143"/>
        <end position="163"/>
    </location>
</feature>
<feature type="transmembrane region" description="Helical" evidence="1">
    <location>
        <begin position="193"/>
        <end position="213"/>
    </location>
</feature>
<feature type="transmembrane region" description="Helical" evidence="1">
    <location>
        <begin position="219"/>
        <end position="239"/>
    </location>
</feature>
<feature type="transmembrane region" description="Helical" evidence="1">
    <location>
        <begin position="342"/>
        <end position="362"/>
    </location>
</feature>
<feature type="transmembrane region" description="Helical" evidence="1">
    <location>
        <begin position="374"/>
        <end position="394"/>
    </location>
</feature>
<feature type="transmembrane region" description="Helical" evidence="1">
    <location>
        <begin position="423"/>
        <end position="443"/>
    </location>
</feature>
<feature type="transmembrane region" description="Helical" evidence="1">
    <location>
        <begin position="460"/>
        <end position="480"/>
    </location>
</feature>
<feature type="transmembrane region" description="Helical" evidence="1">
    <location>
        <begin position="501"/>
        <end position="521"/>
    </location>
</feature>
<feature type="transmembrane region" description="Helical" evidence="1">
    <location>
        <begin position="542"/>
        <end position="562"/>
    </location>
</feature>
<feature type="binding site">
    <location>
        <position position="356"/>
    </location>
    <ligand>
        <name>substrate</name>
    </ligand>
</feature>
<feature type="binding site">
    <location>
        <position position="360"/>
    </location>
    <ligand>
        <name>substrate</name>
    </ligand>
</feature>
<feature type="modified residue" description="Phosphothreonine; by CIPK23" evidence="6">
    <location>
        <position position="101"/>
    </location>
</feature>
<feature type="mutagenesis site" description="No effect on phosphorylation and on nitrate transport." evidence="6">
    <original>T</original>
    <variation>A</variation>
    <location>
        <position position="28"/>
    </location>
</feature>
<feature type="mutagenesis site" description="Loss of the transporter activity." evidence="16">
    <original>E</original>
    <variation>A</variation>
    <location>
        <position position="41"/>
    </location>
</feature>
<feature type="mutagenesis site" description="Loss of the transporter activity." evidence="16">
    <original>E</original>
    <variation>A</variation>
    <location>
        <position position="44"/>
    </location>
</feature>
<feature type="mutagenesis site" description="Loss of the transporter activity." evidence="16 17">
    <original>R</original>
    <variation>A</variation>
    <location>
        <position position="45"/>
    </location>
</feature>
<feature type="mutagenesis site" description="Loss of phosphorylation and 91% reduction of high-affinity nitrate transport, but no effect on the nitrate binding." evidence="6 17">
    <original>T</original>
    <variation>A</variation>
    <location>
        <position position="101"/>
    </location>
</feature>
<feature type="mutagenesis site" description="Loss of low-affinity nitrate transport." evidence="6 17">
    <original>T</original>
    <variation>D</variation>
    <location>
        <position position="101"/>
    </location>
</feature>
<feature type="mutagenesis site" description="90% reduction of the transporter activity." evidence="16">
    <original>C</original>
    <variation>A</variation>
    <location>
        <position position="130"/>
    </location>
</feature>
<feature type="mutagenesis site" description="90% reduction of the transporter activity." evidence="16 17">
    <original>K</original>
    <variation>A</variation>
    <location>
        <position position="164"/>
    </location>
</feature>
<feature type="mutagenesis site" description="Loss of the transporter activity." evidence="16 17">
    <original>H</original>
    <variation>A</variation>
    <location>
        <position position="356"/>
    </location>
</feature>
<feature type="mutagenesis site" description="80% reduction of the transporter activity." evidence="16">
    <original>E</original>
    <variation>A</variation>
    <location>
        <position position="476"/>
    </location>
</feature>
<feature type="mutagenesis site" description="In chl1-9; loss of high- and low-affinity nitrate transport, but no effect on nitrate sensing." evidence="13">
    <original>P</original>
    <variation>L</variation>
    <location>
        <position position="492"/>
    </location>
</feature>
<feature type="strand" evidence="21">
    <location>
        <begin position="18"/>
        <end position="20"/>
    </location>
</feature>
<feature type="strand" evidence="21">
    <location>
        <begin position="25"/>
        <end position="29"/>
    </location>
</feature>
<feature type="helix" evidence="21">
    <location>
        <begin position="33"/>
        <end position="37"/>
    </location>
</feature>
<feature type="helix" evidence="21">
    <location>
        <begin position="39"/>
        <end position="53"/>
    </location>
</feature>
<feature type="helix" evidence="21">
    <location>
        <begin position="56"/>
        <end position="61"/>
    </location>
</feature>
<feature type="helix" evidence="21">
    <location>
        <begin position="67"/>
        <end position="94"/>
    </location>
</feature>
<feature type="helix" evidence="21">
    <location>
        <begin position="98"/>
        <end position="121"/>
    </location>
</feature>
<feature type="turn" evidence="21">
    <location>
        <begin position="132"/>
        <end position="134"/>
    </location>
</feature>
<feature type="helix" evidence="21">
    <location>
        <begin position="143"/>
        <end position="171"/>
    </location>
</feature>
<feature type="helix" evidence="21">
    <location>
        <begin position="172"/>
        <end position="174"/>
    </location>
</feature>
<feature type="helix" evidence="21">
    <location>
        <begin position="182"/>
        <end position="184"/>
    </location>
</feature>
<feature type="helix" evidence="21">
    <location>
        <begin position="185"/>
        <end position="204"/>
    </location>
</feature>
<feature type="helix" evidence="21">
    <location>
        <begin position="207"/>
        <end position="214"/>
    </location>
</feature>
<feature type="helix" evidence="21">
    <location>
        <begin position="217"/>
        <end position="236"/>
    </location>
</feature>
<feature type="helix" evidence="21">
    <location>
        <begin position="237"/>
        <end position="241"/>
    </location>
</feature>
<feature type="helix" evidence="21">
    <location>
        <begin position="251"/>
        <end position="261"/>
    </location>
</feature>
<feature type="strand" evidence="21">
    <location>
        <begin position="277"/>
        <end position="279"/>
    </location>
</feature>
<feature type="helix" evidence="21">
    <location>
        <begin position="330"/>
        <end position="340"/>
    </location>
</feature>
<feature type="helix" evidence="21">
    <location>
        <begin position="343"/>
        <end position="347"/>
    </location>
</feature>
<feature type="helix" evidence="21">
    <location>
        <begin position="350"/>
        <end position="360"/>
    </location>
</feature>
<feature type="helix" evidence="21">
    <location>
        <begin position="362"/>
        <end position="369"/>
    </location>
</feature>
<feature type="helix" evidence="21">
    <location>
        <begin position="381"/>
        <end position="385"/>
    </location>
</feature>
<feature type="helix" evidence="21">
    <location>
        <begin position="386"/>
        <end position="401"/>
    </location>
</feature>
<feature type="helix" evidence="21">
    <location>
        <begin position="403"/>
        <end position="407"/>
    </location>
</feature>
<feature type="turn" evidence="21">
    <location>
        <begin position="408"/>
        <end position="410"/>
    </location>
</feature>
<feature type="strand" evidence="21">
    <location>
        <begin position="414"/>
        <end position="417"/>
    </location>
</feature>
<feature type="helix" evidence="21">
    <location>
        <begin position="419"/>
        <end position="448"/>
    </location>
</feature>
<feature type="helix" evidence="21">
    <location>
        <begin position="462"/>
        <end position="465"/>
    </location>
</feature>
<feature type="helix" evidence="21">
    <location>
        <begin position="466"/>
        <end position="490"/>
    </location>
</feature>
<feature type="helix" evidence="21">
    <location>
        <begin position="497"/>
        <end position="525"/>
    </location>
</feature>
<feature type="turn" evidence="21">
    <location>
        <begin position="526"/>
        <end position="528"/>
    </location>
</feature>
<feature type="helix" evidence="21">
    <location>
        <begin position="536"/>
        <end position="538"/>
    </location>
</feature>
<feature type="helix" evidence="21">
    <location>
        <begin position="542"/>
        <end position="569"/>
    </location>
</feature>
<feature type="turn" evidence="21">
    <location>
        <begin position="572"/>
        <end position="574"/>
    </location>
</feature>
<protein>
    <recommendedName>
        <fullName>Protein NRT1/ PTR FAMILY 6.3</fullName>
        <shortName>AtNPF6.3</shortName>
    </recommendedName>
    <alternativeName>
        <fullName>Nitrate transporter 1.1</fullName>
        <shortName>AtNRT1</shortName>
    </alternativeName>
    <alternativeName>
        <fullName>Nitrate/chlorate transporter</fullName>
    </alternativeName>
    <alternativeName>
        <fullName>Protein CHLORINA 1</fullName>
    </alternativeName>
</protein>
<comment type="function">
    <text evidence="2 5 6 9 10 12 13 14 15 18 19">Dual affinity nitrate transporter. Involved in proton-dependent nitrate uptake and in the regulation of the nitrate transporter NRT2.1. Also acts as a nitrate sensor that trigger a specific signaling pathway stimulating lateral root growth and seed germination. The uptake activity is not required for sensor function. Displays an auxin transport facilitation inhibited by high nitrate concentration. Required to prevent auxin accumulation in preemerged lateral root primordia and young lateral roots when external nitrate concentration is low or null. May be involved in the basipetal transport of auxin out of the lateral root tips. Acts as a bidirectional transporter involved in root-to-shoot nitrate translocation. Recognizes specifically nitrate and chlorate, but not nitrite, alanine, sulfate, phosphate or the di-peptide Ala-Ala.</text>
</comment>
<comment type="biophysicochemical properties">
    <kinetics>
        <KM evidence="2">49 uM for nitrate (for the high-affinity phase, in the presence of 250 uM nitrate at pH 5.5)</KM>
        <KM evidence="2">4 mM for nitrate (for the low-affinity phase, in the presence of 10 mM nitrate at pH 5.5)</KM>
    </kinetics>
</comment>
<comment type="subunit">
    <text evidence="13 16 17">Monomer and homodimer. The dimer has the 2 monomers in the same orientation. Interacts with CIPK23.</text>
</comment>
<comment type="interaction">
    <interactant intactId="EBI-2463703">
        <id>Q05085</id>
    </interactant>
    <interactant intactId="EBI-974277">
        <id>Q93VD3</id>
        <label>CIPK23</label>
    </interactant>
    <organismsDiffer>false</organismsDiffer>
    <experiments>3</experiments>
</comment>
<comment type="subcellular location">
    <subcellularLocation>
        <location evidence="14">Membrane</location>
        <topology evidence="14">Multi-pass membrane protein</topology>
    </subcellularLocation>
</comment>
<comment type="tissue specificity">
    <text evidence="3 5 11 14">Expressed in the stele in lateral root primordia before emergence and in the tip of primary and emerged lateral roots. Detected in emerging and immature leaves, guard cells, flower buds, style, stigma, anthers and pollen grains. Not detected in the shoot apical meristem.</text>
</comment>
<comment type="developmental stage">
    <text evidence="3">Expressed in the columella root cap at day 1 after germination. At day 3, detected in the root meristematic region and at day 5, expressed throughout the root tip.</text>
</comment>
<comment type="induction">
    <text evidence="2 4 7 8">By nitrate and auxin.</text>
</comment>
<comment type="PTM">
    <text evidence="6 13">Acts as a high-affinity nitrate transporter when phosphorylated and as a low-affinity transporter when dephosphorylated. Forms homodimer when unphosphorylated and monomer when phosphorylated. Low nitrogen concentration in the medium stimulates phosphorylation. Phosphorylation also regulates the nitrate signaling.</text>
</comment>
<comment type="disruption phenotype">
    <text evidence="5 9 15">Altered development of nascent organs. Reduced stomatal opening and reduced transpiration rates in the light resulting in enhanced drought tolerance. Slower translocation of nitrate to the leaves.</text>
</comment>
<comment type="miscellaneous">
    <text>When mutated confers resistance to the herbicide chlorate.</text>
</comment>
<comment type="miscellaneous">
    <text>The kinase CIPK23 is a negative regulator of the high-affinity response, while the kinase CIPK8 is a positive regulator of the low-affinity response. Thr-101 is not the direct target of CIPK8.</text>
</comment>
<comment type="similarity">
    <text evidence="20">Belongs to the major facilitator superfamily. Proton-dependent oligopeptide transporter (POT/PTR) (TC 2.A.17) family.</text>
</comment>
<gene>
    <name type="primary">NPF6.3</name>
    <name type="synonym">CHL1</name>
    <name type="synonym">NRT1</name>
    <name type="synonym">NRT1.1</name>
    <name type="ordered locus">At1g12110</name>
    <name type="ORF">F12F1.1</name>
    <name type="ORF">T28K15_13</name>
</gene>
<accession>Q05085</accession>
<accession>B9DHE6</accession>
<reference key="1">
    <citation type="journal article" date="1993" name="Cell">
        <title>The herbicide sensitivity gene CHL1 of Arabidopsis encodes a nitrate-inducible nitrate transporter.</title>
        <authorList>
            <person name="Tsay Y.-F."/>
            <person name="Schroeder J.I."/>
            <person name="Feldmann K.A."/>
            <person name="Crawford N.M."/>
        </authorList>
    </citation>
    <scope>NUCLEOTIDE SEQUENCE [MRNA]</scope>
    <scope>FUNCTION</scope>
</reference>
<reference key="2">
    <citation type="journal article" date="2000" name="Nature">
        <title>Sequence and analysis of chromosome 1 of the plant Arabidopsis thaliana.</title>
        <authorList>
            <person name="Theologis A."/>
            <person name="Ecker J.R."/>
            <person name="Palm C.J."/>
            <person name="Federspiel N.A."/>
            <person name="Kaul S."/>
            <person name="White O."/>
            <person name="Alonso J."/>
            <person name="Altafi H."/>
            <person name="Araujo R."/>
            <person name="Bowman C.L."/>
            <person name="Brooks S.Y."/>
            <person name="Buehler E."/>
            <person name="Chan A."/>
            <person name="Chao Q."/>
            <person name="Chen H."/>
            <person name="Cheuk R.F."/>
            <person name="Chin C.W."/>
            <person name="Chung M.K."/>
            <person name="Conn L."/>
            <person name="Conway A.B."/>
            <person name="Conway A.R."/>
            <person name="Creasy T.H."/>
            <person name="Dewar K."/>
            <person name="Dunn P."/>
            <person name="Etgu P."/>
            <person name="Feldblyum T.V."/>
            <person name="Feng J.-D."/>
            <person name="Fong B."/>
            <person name="Fujii C.Y."/>
            <person name="Gill J.E."/>
            <person name="Goldsmith A.D."/>
            <person name="Haas B."/>
            <person name="Hansen N.F."/>
            <person name="Hughes B."/>
            <person name="Huizar L."/>
            <person name="Hunter J.L."/>
            <person name="Jenkins J."/>
            <person name="Johnson-Hopson C."/>
            <person name="Khan S."/>
            <person name="Khaykin E."/>
            <person name="Kim C.J."/>
            <person name="Koo H.L."/>
            <person name="Kremenetskaia I."/>
            <person name="Kurtz D.B."/>
            <person name="Kwan A."/>
            <person name="Lam B."/>
            <person name="Langin-Hooper S."/>
            <person name="Lee A."/>
            <person name="Lee J.M."/>
            <person name="Lenz C.A."/>
            <person name="Li J.H."/>
            <person name="Li Y.-P."/>
            <person name="Lin X."/>
            <person name="Liu S.X."/>
            <person name="Liu Z.A."/>
            <person name="Luros J.S."/>
            <person name="Maiti R."/>
            <person name="Marziali A."/>
            <person name="Militscher J."/>
            <person name="Miranda M."/>
            <person name="Nguyen M."/>
            <person name="Nierman W.C."/>
            <person name="Osborne B.I."/>
            <person name="Pai G."/>
            <person name="Peterson J."/>
            <person name="Pham P.K."/>
            <person name="Rizzo M."/>
            <person name="Rooney T."/>
            <person name="Rowley D."/>
            <person name="Sakano H."/>
            <person name="Salzberg S.L."/>
            <person name="Schwartz J.R."/>
            <person name="Shinn P."/>
            <person name="Southwick A.M."/>
            <person name="Sun H."/>
            <person name="Tallon L.J."/>
            <person name="Tambunga G."/>
            <person name="Toriumi M.J."/>
            <person name="Town C.D."/>
            <person name="Utterback T."/>
            <person name="Van Aken S."/>
            <person name="Vaysberg M."/>
            <person name="Vysotskaia V.S."/>
            <person name="Walker M."/>
            <person name="Wu D."/>
            <person name="Yu G."/>
            <person name="Fraser C.M."/>
            <person name="Venter J.C."/>
            <person name="Davis R.W."/>
        </authorList>
    </citation>
    <scope>NUCLEOTIDE SEQUENCE [LARGE SCALE GENOMIC DNA]</scope>
    <source>
        <strain>cv. Columbia</strain>
    </source>
</reference>
<reference key="3">
    <citation type="journal article" date="2017" name="Plant J.">
        <title>Araport11: a complete reannotation of the Arabidopsis thaliana reference genome.</title>
        <authorList>
            <person name="Cheng C.Y."/>
            <person name="Krishnakumar V."/>
            <person name="Chan A.P."/>
            <person name="Thibaud-Nissen F."/>
            <person name="Schobel S."/>
            <person name="Town C.D."/>
        </authorList>
    </citation>
    <scope>GENOME REANNOTATION</scope>
    <source>
        <strain>cv. Columbia</strain>
    </source>
</reference>
<reference key="4">
    <citation type="journal article" date="2003" name="Science">
        <title>Empirical analysis of transcriptional activity in the Arabidopsis genome.</title>
        <authorList>
            <person name="Yamada K."/>
            <person name="Lim J."/>
            <person name="Dale J.M."/>
            <person name="Chen H."/>
            <person name="Shinn P."/>
            <person name="Palm C.J."/>
            <person name="Southwick A.M."/>
            <person name="Wu H.C."/>
            <person name="Kim C.J."/>
            <person name="Nguyen M."/>
            <person name="Pham P.K."/>
            <person name="Cheuk R.F."/>
            <person name="Karlin-Newmann G."/>
            <person name="Liu S.X."/>
            <person name="Lam B."/>
            <person name="Sakano H."/>
            <person name="Wu T."/>
            <person name="Yu G."/>
            <person name="Miranda M."/>
            <person name="Quach H.L."/>
            <person name="Tripp M."/>
            <person name="Chang C.H."/>
            <person name="Lee J.M."/>
            <person name="Toriumi M.J."/>
            <person name="Chan M.M."/>
            <person name="Tang C.C."/>
            <person name="Onodera C.S."/>
            <person name="Deng J.M."/>
            <person name="Akiyama K."/>
            <person name="Ansari Y."/>
            <person name="Arakawa T."/>
            <person name="Banh J."/>
            <person name="Banno F."/>
            <person name="Bowser L."/>
            <person name="Brooks S.Y."/>
            <person name="Carninci P."/>
            <person name="Chao Q."/>
            <person name="Choy N."/>
            <person name="Enju A."/>
            <person name="Goldsmith A.D."/>
            <person name="Gurjal M."/>
            <person name="Hansen N.F."/>
            <person name="Hayashizaki Y."/>
            <person name="Johnson-Hopson C."/>
            <person name="Hsuan V.W."/>
            <person name="Iida K."/>
            <person name="Karnes M."/>
            <person name="Khan S."/>
            <person name="Koesema E."/>
            <person name="Ishida J."/>
            <person name="Jiang P.X."/>
            <person name="Jones T."/>
            <person name="Kawai J."/>
            <person name="Kamiya A."/>
            <person name="Meyers C."/>
            <person name="Nakajima M."/>
            <person name="Narusaka M."/>
            <person name="Seki M."/>
            <person name="Sakurai T."/>
            <person name="Satou M."/>
            <person name="Tamse R."/>
            <person name="Vaysberg M."/>
            <person name="Wallender E.K."/>
            <person name="Wong C."/>
            <person name="Yamamura Y."/>
            <person name="Yuan S."/>
            <person name="Shinozaki K."/>
            <person name="Davis R.W."/>
            <person name="Theologis A."/>
            <person name="Ecker J.R."/>
        </authorList>
    </citation>
    <scope>NUCLEOTIDE SEQUENCE [LARGE SCALE MRNA]</scope>
    <source>
        <strain>cv. Columbia</strain>
    </source>
</reference>
<reference key="5">
    <citation type="journal article" date="2009" name="DNA Res.">
        <title>Analysis of multiple occurrences of alternative splicing events in Arabidopsis thaliana using novel sequenced full-length cDNAs.</title>
        <authorList>
            <person name="Iida K."/>
            <person name="Fukami-Kobayashi K."/>
            <person name="Toyoda A."/>
            <person name="Sakaki Y."/>
            <person name="Kobayashi M."/>
            <person name="Seki M."/>
            <person name="Shinozaki K."/>
        </authorList>
    </citation>
    <scope>NUCLEOTIDE SEQUENCE [LARGE SCALE MRNA]</scope>
    <source>
        <strain>cv. Columbia</strain>
    </source>
</reference>
<reference key="6">
    <citation type="journal article" date="1998" name="Proc. Natl. Acad. Sci. U.S.A.">
        <title>The Arabidopsis CHL1 protein plays a major role in high-affinity nitrate uptake.</title>
        <authorList>
            <person name="Wang R."/>
            <person name="Liu D."/>
            <person name="Crawford N.M."/>
        </authorList>
    </citation>
    <scope>FUNCTION</scope>
</reference>
<reference key="7">
    <citation type="journal article" date="1999" name="Plant Cell">
        <title>CHL1 is a dual-affinity nitrate transporter of Arabidopsis involved in multiple phases of nitrate uptake.</title>
        <authorList>
            <person name="Liu K.H."/>
            <person name="Huang C.Y."/>
            <person name="Tsay Y.F."/>
        </authorList>
    </citation>
    <scope>FUNCTION</scope>
    <scope>BIOPHYSICOCHEMICAL PROPERTIES</scope>
    <scope>INDUCTION BY NITRATE</scope>
</reference>
<reference key="8">
    <citation type="journal article" date="2001" name="Plant Cell">
        <title>The Arabidopsis dual-affinity nitrate transporter gene AtNRT1.1 (CHL1) is activated and functions in nascent organ development during vegetative and reproductive growth.</title>
        <authorList>
            <person name="Guo F.Q."/>
            <person name="Wang R."/>
            <person name="Chen M."/>
            <person name="Crawford N.M."/>
        </authorList>
    </citation>
    <scope>TISSUE SPECIFICITY</scope>
    <scope>DEVELOPMENTAL STAGE</scope>
</reference>
<reference key="9">
    <citation type="journal article" date="2002" name="J. Exp. Bot.">
        <title>The Arabidopsis dual-affinity nitrate transporter gene AtNRT1.1 (CHL1) is regulated by auxin in both shoots and roots.</title>
        <authorList>
            <person name="Guo F.Q."/>
            <person name="Wang R."/>
            <person name="Crawford N.M."/>
        </authorList>
    </citation>
    <scope>INDUCTION BY AUXIN</scope>
</reference>
<reference key="10">
    <citation type="journal article" date="2003" name="EMBO J.">
        <title>Switching between the two action modes of the dual-affinity nitrate transporter CHL1 by phosphorylation.</title>
        <authorList>
            <person name="Liu K.H."/>
            <person name="Tsay Y.F."/>
        </authorList>
    </citation>
    <scope>FUNCTION</scope>
    <scope>MUTAGENESIS OF THR-28 AND THR-101</scope>
    <scope>PHOSPHORYLATION AT THR-101</scope>
</reference>
<reference key="11">
    <citation type="journal article" date="2003" name="Plant Cell">
        <title>The nitrate transporter AtNRT1.1 (CHL1) functions in stomatal opening and contributes to drought susceptibility in Arabidopsis.</title>
        <authorList>
            <person name="Guo F.Q."/>
            <person name="Young J."/>
            <person name="Crawford N.M."/>
        </authorList>
    </citation>
    <scope>FUNCTION</scope>
    <scope>DISRUPTION PHENOTYPE</scope>
    <scope>TISSUE SPECIFICITY</scope>
</reference>
<reference key="12">
    <citation type="journal article" date="2003" name="Plant Cell Physiol.">
        <title>Regulation of NRT1 and NRT2 gene families of Arabidopsis thaliana: responses to nitrate provision.</title>
        <authorList>
            <person name="Okamoto M."/>
            <person name="Vidmar J.J."/>
            <person name="Glass A.D."/>
        </authorList>
    </citation>
    <scope>GENE FAMILY</scope>
    <scope>INDUCTION BY NITRATE</scope>
</reference>
<reference key="13">
    <citation type="journal article" date="2003" name="Plant Physiol.">
        <title>Microarray analysis of the nitrate response in Arabidopsis roots and shoots reveals over 1,000 rapidly responding genes and new linkages to glucose, trehalose-6-phosphate, iron, and sulfate metabolism.</title>
        <authorList>
            <person name="Wang R."/>
            <person name="Okamoto M."/>
            <person name="Xing X."/>
            <person name="Crawford N.M."/>
        </authorList>
    </citation>
    <scope>INDUCTION BY NITRATE</scope>
</reference>
<reference key="14">
    <citation type="journal article" date="2004" name="Plant Cell">
        <title>Transcript profiling in the chl1-5 mutant of Arabidopsis reveals a role of the nitrate transporter NRT1.1 in the regulation of another nitrate transporter, NRT2.1.</title>
        <authorList>
            <person name="Munos S."/>
            <person name="Cazettes C."/>
            <person name="Fizames C."/>
            <person name="Gaymard F."/>
            <person name="Tillard P."/>
            <person name="Lepetit M."/>
            <person name="Lejay L."/>
            <person name="Gojon A."/>
        </authorList>
    </citation>
    <scope>FUNCTION</scope>
    <scope>DISRUPTION PHENOTYPE</scope>
</reference>
<reference key="15">
    <citation type="journal article" date="2006" name="Proc. Natl. Acad. Sci. U.S.A.">
        <title>The Arabidopsis NRT1.1 transporter participates in the signaling pathway triggering root colonization of nitrate-rich patches.</title>
        <authorList>
            <person name="Remans T."/>
            <person name="Nacry P."/>
            <person name="Pervent M."/>
            <person name="Filleur S."/>
            <person name="Diatloff E."/>
            <person name="Mounier E."/>
            <person name="Tillard P."/>
            <person name="Forde B.G."/>
            <person name="Gojon A."/>
        </authorList>
    </citation>
    <scope>FUNCTION</scope>
</reference>
<reference key="16">
    <citation type="journal article" date="2007" name="FEBS Lett.">
        <title>Nitrate transporters and peptide transporters.</title>
        <authorList>
            <person name="Tsay Y.F."/>
            <person name="Chiu C.C."/>
            <person name="Tsai C.B."/>
            <person name="Ho C.H."/>
            <person name="Hsu P.K."/>
        </authorList>
    </citation>
    <scope>TISSUE SPECIFICITY</scope>
    <scope>GENE FAMILY</scope>
</reference>
<reference key="17">
    <citation type="journal article" date="2009" name="Cell">
        <title>CHL1 functions as a nitrate sensor in plants.</title>
        <authorList>
            <person name="Ho C.H."/>
            <person name="Lin S.H."/>
            <person name="Hu H.C."/>
            <person name="Tsay Y.F."/>
        </authorList>
    </citation>
    <scope>FUNCTION</scope>
    <scope>PHOSPHORYLATION</scope>
    <scope>MUTAGENESIS OF PRO-492</scope>
    <scope>INTERACTION WITH CIPK23</scope>
</reference>
<reference key="18">
    <citation type="journal article" date="2009" name="Plant Physiol.">
        <title>A genetic screen for nitrate regulatory mutants captures the nitrate transporter gene NRT1.1.</title>
        <authorList>
            <person name="Wang R."/>
            <person name="Xing X."/>
            <person name="Wang Y."/>
            <person name="Tran A."/>
            <person name="Crawford N.M."/>
        </authorList>
    </citation>
    <scope>FUNCTION</scope>
</reference>
<reference key="19">
    <citation type="journal article" date="2010" name="Dev. Cell">
        <title>Nitrate-regulated auxin transport by NRT1.1 defines a mechanism for nutrient sensing in plants.</title>
        <authorList>
            <person name="Krouk G."/>
            <person name="Lacombe B."/>
            <person name="Bielach A."/>
            <person name="Perrine-Walker F."/>
            <person name="Malinska K."/>
            <person name="Mounier E."/>
            <person name="Hoyerova K."/>
            <person name="Tillard P."/>
            <person name="Leon S."/>
            <person name="Ljung K."/>
            <person name="Zazimalova E."/>
            <person name="Benkova E."/>
            <person name="Nacry P."/>
            <person name="Gojon A."/>
        </authorList>
    </citation>
    <scope>FUNCTION</scope>
    <scope>SUBCELLULAR LOCATION</scope>
    <scope>TISSUE SPECIFICITY</scope>
</reference>
<reference key="20">
    <citation type="journal article" date="2013" name="Mol. Plant">
        <title>Arabidopsis NRT1.1 is a bidirectional transporter involved in root-to-shoot nitrate translocation.</title>
        <authorList>
            <person name="Leran S."/>
            <person name="Munos S."/>
            <person name="Brachet C."/>
            <person name="Tillard P."/>
            <person name="Gojon A."/>
            <person name="Lacombe B."/>
        </authorList>
    </citation>
    <scope>FUNCTION</scope>
    <scope>DISRUPTION PHENOTYPE</scope>
</reference>
<reference key="21">
    <citation type="journal article" date="2014" name="Trends Plant Sci.">
        <title>A unified nomenclature of NITRATE TRANSPORTER 1/PEPTIDE TRANSPORTER family members in plants.</title>
        <authorList>
            <person name="Leran S."/>
            <person name="Varala K."/>
            <person name="Boyer J.C."/>
            <person name="Chiurazzi M."/>
            <person name="Crawford N."/>
            <person name="Daniel-Vedele F."/>
            <person name="David L."/>
            <person name="Dickstein R."/>
            <person name="Fernandez E."/>
            <person name="Forde B."/>
            <person name="Gassmann W."/>
            <person name="Geiger D."/>
            <person name="Gojon A."/>
            <person name="Gong J.M."/>
            <person name="Halkier B.A."/>
            <person name="Harris J.M."/>
            <person name="Hedrich R."/>
            <person name="Limami A.M."/>
            <person name="Rentsch D."/>
            <person name="Seo M."/>
            <person name="Tsay Y.F."/>
            <person name="Zhang M."/>
            <person name="Coruzzi G."/>
            <person name="Lacombe B."/>
        </authorList>
    </citation>
    <scope>GENE FAMILY</scope>
    <scope>NOMENCLATURE</scope>
</reference>
<reference key="22">
    <citation type="journal article" date="2014" name="Nature">
        <title>Molecular basis of nitrate uptake by the plant nitrate transporter NRT1.1.</title>
        <authorList>
            <person name="Parker J.L."/>
            <person name="Newstead S."/>
        </authorList>
    </citation>
    <scope>X-RAY CRYSTALLOGRAPHY (3.70 ANGSTROMS) IN COMPLEX WITH NITRATE</scope>
    <scope>SUBSTRATE</scope>
    <scope>MUTAGENESIS OF ARG-45; THR-101; LYS-164 AND HIS-356</scope>
</reference>
<reference key="23">
    <citation type="journal article" date="2014" name="Nature">
        <title>Crystal structure of the plant dual-affinity nitrate transporter NRT1.1.</title>
        <authorList>
            <person name="Sun J."/>
            <person name="Bankston J.R."/>
            <person name="Payandeh J."/>
            <person name="Hinds T.R."/>
            <person name="Zagotta W.N."/>
            <person name="Zheng N."/>
        </authorList>
    </citation>
    <scope>X-RAY CRYSTALLOGRAPHY (3.25 ANGSTROMS) IN COMPLEX WITH NITRATE</scope>
    <scope>SUBUNIT</scope>
    <scope>MUTAGENESIS OF GLU-41; GLU-44; ARG-45; CYS-130; LYS-164; HIS-356 AND GLU-476</scope>
</reference>
<organism>
    <name type="scientific">Arabidopsis thaliana</name>
    <name type="common">Mouse-ear cress</name>
    <dbReference type="NCBI Taxonomy" id="3702"/>
    <lineage>
        <taxon>Eukaryota</taxon>
        <taxon>Viridiplantae</taxon>
        <taxon>Streptophyta</taxon>
        <taxon>Embryophyta</taxon>
        <taxon>Tracheophyta</taxon>
        <taxon>Spermatophyta</taxon>
        <taxon>Magnoliopsida</taxon>
        <taxon>eudicotyledons</taxon>
        <taxon>Gunneridae</taxon>
        <taxon>Pentapetalae</taxon>
        <taxon>rosids</taxon>
        <taxon>malvids</taxon>
        <taxon>Brassicales</taxon>
        <taxon>Brassicaceae</taxon>
        <taxon>Camelineae</taxon>
        <taxon>Arabidopsis</taxon>
    </lineage>
</organism>
<keyword id="KW-0002">3D-structure</keyword>
<keyword id="KW-0927">Auxin signaling pathway</keyword>
<keyword id="KW-0359">Herbicide resistance</keyword>
<keyword id="KW-0472">Membrane</keyword>
<keyword id="KW-0534">Nitrate assimilation</keyword>
<keyword id="KW-0597">Phosphoprotein</keyword>
<keyword id="KW-1185">Reference proteome</keyword>
<keyword id="KW-0769">Symport</keyword>
<keyword id="KW-0812">Transmembrane</keyword>
<keyword id="KW-1133">Transmembrane helix</keyword>
<keyword id="KW-0813">Transport</keyword>
<sequence>MSLPETKSDDILLDAWDFQGRPADRSKTGGWASAAMILCIEAVERLTTLGIGVNLVTYLTGTMHLGNATAANTVTNFLGTSFMLCLLGGFIADTFLGRYLTIAIFAAIQATGVSILTLSTIIPGLRPPRCNPTTSSHCEQASGIQLTVLYLALYLTALGTGGVKASVSGFGSDQFDETEPKERSKMTYFFNRFFFCINVGSLLAVTVLVYVQDDVGRKWGYGICAFAIVLALSVFLAGTNRYRFKKLIGSPMTQVAAVIVAAWRNRKLELPADPSYLYDVDDIIAAEGSMKGKQKLPHTEQFRSLDKAAIRDQEAGVTSNVFNKWTLSTLTDVEEVKQIVRMLPIWATCILFWTVHAQLTTLSVAQSETLDRSIGSFEIPPASMAVFYVGGLLLTTAVYDRVAIRLCKKLFNYPHGLRPLQRIGLGLFFGSMAMAVAALVELKRLRTAHAHGPTVKTLPLGFYLLIPQYLIVGIGEALIYTGQLDFFLRECPKGMKGMSTGLLLSTLALGFFFSSVLVTIVEKFTGKAHPWIADDLNKGRLYNFYWLVAVLVALNFLIFLVFSKWYVYKEKRLAEVGIELDDEPSIPMGH</sequence>
<dbReference type="EMBL" id="L10357">
    <property type="protein sequence ID" value="AAA32770.1"/>
    <property type="molecule type" value="mRNA"/>
</dbReference>
<dbReference type="EMBL" id="AC002131">
    <property type="protein sequence ID" value="AAC17604.1"/>
    <property type="molecule type" value="Genomic_DNA"/>
</dbReference>
<dbReference type="EMBL" id="CP002684">
    <property type="protein sequence ID" value="AEE28838.1"/>
    <property type="molecule type" value="Genomic_DNA"/>
</dbReference>
<dbReference type="EMBL" id="BT002016">
    <property type="protein sequence ID" value="AAN72027.1"/>
    <property type="molecule type" value="mRNA"/>
</dbReference>
<dbReference type="EMBL" id="BT008783">
    <property type="protein sequence ID" value="AAP68222.1"/>
    <property type="molecule type" value="mRNA"/>
</dbReference>
<dbReference type="EMBL" id="AK317498">
    <property type="protein sequence ID" value="BAH20163.1"/>
    <property type="molecule type" value="mRNA"/>
</dbReference>
<dbReference type="PIR" id="A45772">
    <property type="entry name" value="A45772"/>
</dbReference>
<dbReference type="RefSeq" id="NP_563899.1">
    <property type="nucleotide sequence ID" value="NM_101083.4"/>
</dbReference>
<dbReference type="PDB" id="4OH3">
    <property type="method" value="X-ray"/>
    <property type="resolution" value="3.25 A"/>
    <property type="chains" value="A/B=1-590"/>
</dbReference>
<dbReference type="PDB" id="5A2N">
    <property type="method" value="X-ray"/>
    <property type="resolution" value="3.70 A"/>
    <property type="chains" value="A/B=1-590"/>
</dbReference>
<dbReference type="PDB" id="5A2O">
    <property type="method" value="X-ray"/>
    <property type="resolution" value="3.71 A"/>
    <property type="chains" value="A/B=1-590"/>
</dbReference>
<dbReference type="PDBsum" id="4OH3"/>
<dbReference type="PDBsum" id="5A2N"/>
<dbReference type="PDBsum" id="5A2O"/>
<dbReference type="SMR" id="Q05085"/>
<dbReference type="BioGRID" id="23003">
    <property type="interactions" value="22"/>
</dbReference>
<dbReference type="FunCoup" id="Q05085">
    <property type="interactions" value="1842"/>
</dbReference>
<dbReference type="IntAct" id="Q05085">
    <property type="interactions" value="20"/>
</dbReference>
<dbReference type="STRING" id="3702.Q05085"/>
<dbReference type="TCDB" id="2.A.17.3.1">
    <property type="family name" value="the proton-dependent oligopeptide transporter (pot/ptr) family"/>
</dbReference>
<dbReference type="iPTMnet" id="Q05085"/>
<dbReference type="PaxDb" id="3702-AT1G12110.1"/>
<dbReference type="ProteomicsDB" id="226104"/>
<dbReference type="EnsemblPlants" id="AT1G12110.1">
    <property type="protein sequence ID" value="AT1G12110.1"/>
    <property type="gene ID" value="AT1G12110"/>
</dbReference>
<dbReference type="GeneID" id="837763"/>
<dbReference type="Gramene" id="AT1G12110.1">
    <property type="protein sequence ID" value="AT1G12110.1"/>
    <property type="gene ID" value="AT1G12110"/>
</dbReference>
<dbReference type="KEGG" id="ath:AT1G12110"/>
<dbReference type="Araport" id="AT1G12110"/>
<dbReference type="TAIR" id="AT1G12110">
    <property type="gene designation" value="NPF6.3"/>
</dbReference>
<dbReference type="eggNOG" id="KOG1237">
    <property type="taxonomic scope" value="Eukaryota"/>
</dbReference>
<dbReference type="HOGENOM" id="CLU_009313_4_1_1"/>
<dbReference type="InParanoid" id="Q05085"/>
<dbReference type="OMA" id="DSYMGNV"/>
<dbReference type="OrthoDB" id="8904098at2759"/>
<dbReference type="PhylomeDB" id="Q05085"/>
<dbReference type="BRENDA" id="7.3.2.4">
    <property type="organism ID" value="399"/>
</dbReference>
<dbReference type="EvolutionaryTrace" id="Q05085"/>
<dbReference type="PRO" id="PR:Q05085"/>
<dbReference type="Proteomes" id="UP000006548">
    <property type="component" value="Chromosome 1"/>
</dbReference>
<dbReference type="ExpressionAtlas" id="Q05085">
    <property type="expression patterns" value="baseline and differential"/>
</dbReference>
<dbReference type="GO" id="GO:0005886">
    <property type="term" value="C:plasma membrane"/>
    <property type="evidence" value="ECO:0000314"/>
    <property type="project" value="TAIR"/>
</dbReference>
<dbReference type="GO" id="GO:0015112">
    <property type="term" value="F:nitrate transmembrane transporter activity"/>
    <property type="evidence" value="ECO:0000315"/>
    <property type="project" value="TAIR"/>
</dbReference>
<dbReference type="GO" id="GO:0015293">
    <property type="term" value="F:symporter activity"/>
    <property type="evidence" value="ECO:0007669"/>
    <property type="project" value="UniProtKB-KW"/>
</dbReference>
<dbReference type="GO" id="GO:0009734">
    <property type="term" value="P:auxin-activated signaling pathway"/>
    <property type="evidence" value="ECO:0007669"/>
    <property type="project" value="UniProtKB-KW"/>
</dbReference>
<dbReference type="GO" id="GO:0010540">
    <property type="term" value="P:basipetal auxin transport"/>
    <property type="evidence" value="ECO:0000315"/>
    <property type="project" value="TAIR"/>
</dbReference>
<dbReference type="GO" id="GO:0048527">
    <property type="term" value="P:lateral root development"/>
    <property type="evidence" value="ECO:0000315"/>
    <property type="project" value="TAIR"/>
</dbReference>
<dbReference type="GO" id="GO:0042128">
    <property type="term" value="P:nitrate assimilation"/>
    <property type="evidence" value="ECO:0007669"/>
    <property type="project" value="UniProtKB-KW"/>
</dbReference>
<dbReference type="GO" id="GO:0015706">
    <property type="term" value="P:nitrate transmembrane transport"/>
    <property type="evidence" value="ECO:0000315"/>
    <property type="project" value="TAIR"/>
</dbReference>
<dbReference type="GO" id="GO:0006857">
    <property type="term" value="P:oligopeptide transport"/>
    <property type="evidence" value="ECO:0007669"/>
    <property type="project" value="InterPro"/>
</dbReference>
<dbReference type="GO" id="GO:0048573">
    <property type="term" value="P:photoperiodism, flowering"/>
    <property type="evidence" value="ECO:0000315"/>
    <property type="project" value="TAIR"/>
</dbReference>
<dbReference type="GO" id="GO:0009635">
    <property type="term" value="P:response to herbicide"/>
    <property type="evidence" value="ECO:0007669"/>
    <property type="project" value="UniProtKB-KW"/>
</dbReference>
<dbReference type="GO" id="GO:0010167">
    <property type="term" value="P:response to nitrate"/>
    <property type="evidence" value="ECO:0000315"/>
    <property type="project" value="TAIR"/>
</dbReference>
<dbReference type="GO" id="GO:0009414">
    <property type="term" value="P:response to water deprivation"/>
    <property type="evidence" value="ECO:0000315"/>
    <property type="project" value="TAIR"/>
</dbReference>
<dbReference type="CDD" id="cd17413">
    <property type="entry name" value="MFS_NPF6"/>
    <property type="match status" value="1"/>
</dbReference>
<dbReference type="Gene3D" id="1.20.1250.20">
    <property type="entry name" value="MFS general substrate transporter like domains"/>
    <property type="match status" value="1"/>
</dbReference>
<dbReference type="InterPro" id="IPR036259">
    <property type="entry name" value="MFS_trans_sf"/>
</dbReference>
<dbReference type="InterPro" id="IPR000109">
    <property type="entry name" value="POT_fam"/>
</dbReference>
<dbReference type="InterPro" id="IPR018456">
    <property type="entry name" value="PTR2_symporter_CS"/>
</dbReference>
<dbReference type="PANTHER" id="PTHR11654">
    <property type="entry name" value="OLIGOPEPTIDE TRANSPORTER-RELATED"/>
    <property type="match status" value="1"/>
</dbReference>
<dbReference type="Pfam" id="PF00854">
    <property type="entry name" value="PTR2"/>
    <property type="match status" value="1"/>
</dbReference>
<dbReference type="SUPFAM" id="SSF103473">
    <property type="entry name" value="MFS general substrate transporter"/>
    <property type="match status" value="1"/>
</dbReference>
<dbReference type="PROSITE" id="PS01022">
    <property type="entry name" value="PTR2_1"/>
    <property type="match status" value="1"/>
</dbReference>
<dbReference type="PROSITE" id="PS01023">
    <property type="entry name" value="PTR2_2"/>
    <property type="match status" value="1"/>
</dbReference>